<sequence>MTFTLPQLPYALDALAPHVSKETLEYHYGKHHNTYVTNLNKLIPGTEFESMTLEEIIMKAKGGIFNNAAQVWNHTFYWHSMSPNGGGEPKGRLAEAINKSFGSFAAFKEQFSQTAATTFGSGWAWLVQDQSGALKIINTSNAGTPMTEGLNALLTCDVWEHAYYIDYRNRRPDYIEAFWSLVNWDFASSNLK</sequence>
<reference key="1">
    <citation type="journal article" date="1996" name="Jpn. J. Med. Sci. Biol.">
        <title>Cloning and nucleotide sequences of iron and copper-zinc superoxide dismutase genes of Legionella pneumophila and their distribution among Legionella species.</title>
        <authorList>
            <person name="Amemura-Maekawa J."/>
            <person name="Kura F."/>
            <person name="Watanabe H."/>
        </authorList>
    </citation>
    <scope>NUCLEOTIDE SEQUENCE [GENOMIC DNA]</scope>
</reference>
<reference key="2">
    <citation type="journal article" date="2004" name="Science">
        <title>The genomic sequence of the accidental pathogen Legionella pneumophila.</title>
        <authorList>
            <person name="Chien M."/>
            <person name="Morozova I."/>
            <person name="Shi S."/>
            <person name="Sheng H."/>
            <person name="Chen J."/>
            <person name="Gomez S.M."/>
            <person name="Asamani G."/>
            <person name="Hill K."/>
            <person name="Nuara J."/>
            <person name="Feder M."/>
            <person name="Rineer J."/>
            <person name="Greenberg J.J."/>
            <person name="Steshenko V."/>
            <person name="Park S.H."/>
            <person name="Zhao B."/>
            <person name="Teplitskaya E."/>
            <person name="Edwards J.R."/>
            <person name="Pampou S."/>
            <person name="Georghiou A."/>
            <person name="Chou I.-C."/>
            <person name="Iannuccilli W."/>
            <person name="Ulz M.E."/>
            <person name="Kim D.H."/>
            <person name="Geringer-Sameth A."/>
            <person name="Goldsberry C."/>
            <person name="Morozov P."/>
            <person name="Fischer S.G."/>
            <person name="Segal G."/>
            <person name="Qu X."/>
            <person name="Rzhetsky A."/>
            <person name="Zhang P."/>
            <person name="Cayanis E."/>
            <person name="De Jong P.J."/>
            <person name="Ju J."/>
            <person name="Kalachikov S."/>
            <person name="Shuman H.A."/>
            <person name="Russo J.J."/>
        </authorList>
    </citation>
    <scope>NUCLEOTIDE SEQUENCE [LARGE SCALE GENOMIC DNA]</scope>
    <source>
        <strain>Philadelphia 1 / ATCC 33152 / DSM 7513</strain>
    </source>
</reference>
<keyword id="KW-0408">Iron</keyword>
<keyword id="KW-0479">Metal-binding</keyword>
<keyword id="KW-0560">Oxidoreductase</keyword>
<keyword id="KW-1185">Reference proteome</keyword>
<gene>
    <name type="primary">sodB</name>
    <name type="ordered locus">lpg2967</name>
</gene>
<accession>P31108</accession>
<accession>Q5ZRB5</accession>
<feature type="chain" id="PRO_0000159987" description="Superoxide dismutase [Fe]">
    <location>
        <begin position="1"/>
        <end position="192"/>
    </location>
</feature>
<feature type="binding site" evidence="1">
    <location>
        <position position="27"/>
    </location>
    <ligand>
        <name>Fe cation</name>
        <dbReference type="ChEBI" id="CHEBI:24875"/>
    </ligand>
</feature>
<feature type="binding site" evidence="1">
    <location>
        <position position="74"/>
    </location>
    <ligand>
        <name>Fe cation</name>
        <dbReference type="ChEBI" id="CHEBI:24875"/>
    </ligand>
</feature>
<feature type="binding site" evidence="1">
    <location>
        <position position="157"/>
    </location>
    <ligand>
        <name>Fe cation</name>
        <dbReference type="ChEBI" id="CHEBI:24875"/>
    </ligand>
</feature>
<feature type="binding site" evidence="1">
    <location>
        <position position="161"/>
    </location>
    <ligand>
        <name>Fe cation</name>
        <dbReference type="ChEBI" id="CHEBI:24875"/>
    </ligand>
</feature>
<organism>
    <name type="scientific">Legionella pneumophila subsp. pneumophila (strain Philadelphia 1 / ATCC 33152 / DSM 7513)</name>
    <dbReference type="NCBI Taxonomy" id="272624"/>
    <lineage>
        <taxon>Bacteria</taxon>
        <taxon>Pseudomonadati</taxon>
        <taxon>Pseudomonadota</taxon>
        <taxon>Gammaproteobacteria</taxon>
        <taxon>Legionellales</taxon>
        <taxon>Legionellaceae</taxon>
        <taxon>Legionella</taxon>
    </lineage>
</organism>
<evidence type="ECO:0000250" key="1"/>
<evidence type="ECO:0000305" key="2"/>
<protein>
    <recommendedName>
        <fullName>Superoxide dismutase [Fe]</fullName>
        <ecNumber>1.15.1.1</ecNumber>
    </recommendedName>
</protein>
<comment type="function">
    <text>Destroys superoxide anion radicals which are normally produced within the cells and which are toxic to biological systems.</text>
</comment>
<comment type="catalytic activity">
    <reaction>
        <text>2 superoxide + 2 H(+) = H2O2 + O2</text>
        <dbReference type="Rhea" id="RHEA:20696"/>
        <dbReference type="ChEBI" id="CHEBI:15378"/>
        <dbReference type="ChEBI" id="CHEBI:15379"/>
        <dbReference type="ChEBI" id="CHEBI:16240"/>
        <dbReference type="ChEBI" id="CHEBI:18421"/>
        <dbReference type="EC" id="1.15.1.1"/>
    </reaction>
</comment>
<comment type="cofactor">
    <cofactor evidence="1">
        <name>Fe cation</name>
        <dbReference type="ChEBI" id="CHEBI:24875"/>
    </cofactor>
    <text evidence="1">Binds 1 Fe cation per subunit.</text>
</comment>
<comment type="subunit">
    <text>Homodimer.</text>
</comment>
<comment type="similarity">
    <text evidence="2">Belongs to the iron/manganese superoxide dismutase family.</text>
</comment>
<comment type="sequence caution" evidence="2">
    <conflict type="erroneous initiation">
        <sequence resource="EMBL-CDS" id="AAU29013"/>
    </conflict>
</comment>
<proteinExistence type="inferred from homology"/>
<dbReference type="EC" id="1.15.1.1"/>
<dbReference type="EMBL" id="D12922">
    <property type="protein sequence ID" value="BAA02306.1"/>
    <property type="molecule type" value="Genomic_DNA"/>
</dbReference>
<dbReference type="EMBL" id="AE017354">
    <property type="protein sequence ID" value="AAU29013.1"/>
    <property type="status" value="ALT_INIT"/>
    <property type="molecule type" value="Genomic_DNA"/>
</dbReference>
<dbReference type="PIR" id="JS0749">
    <property type="entry name" value="JS0749"/>
</dbReference>
<dbReference type="RefSeq" id="WP_016357051.1">
    <property type="nucleotide sequence ID" value="NC_002942.5"/>
</dbReference>
<dbReference type="RefSeq" id="YP_096960.1">
    <property type="nucleotide sequence ID" value="NC_002942.5"/>
</dbReference>
<dbReference type="SMR" id="P31108"/>
<dbReference type="STRING" id="272624.lpg2967"/>
<dbReference type="PaxDb" id="272624-lpg2967"/>
<dbReference type="GeneID" id="57036974"/>
<dbReference type="KEGG" id="lpn:lpg2967"/>
<dbReference type="PATRIC" id="fig|272624.6.peg.3172"/>
<dbReference type="eggNOG" id="COG0605">
    <property type="taxonomic scope" value="Bacteria"/>
</dbReference>
<dbReference type="HOGENOM" id="CLU_031625_0_0_6"/>
<dbReference type="OrthoDB" id="9803125at2"/>
<dbReference type="Proteomes" id="UP000000609">
    <property type="component" value="Chromosome"/>
</dbReference>
<dbReference type="GO" id="GO:0046872">
    <property type="term" value="F:metal ion binding"/>
    <property type="evidence" value="ECO:0007669"/>
    <property type="project" value="UniProtKB-KW"/>
</dbReference>
<dbReference type="GO" id="GO:0004784">
    <property type="term" value="F:superoxide dismutase activity"/>
    <property type="evidence" value="ECO:0007669"/>
    <property type="project" value="UniProtKB-EC"/>
</dbReference>
<dbReference type="FunFam" id="1.10.287.990:FF:000002">
    <property type="entry name" value="Superoxide dismutase"/>
    <property type="match status" value="1"/>
</dbReference>
<dbReference type="FunFam" id="3.55.40.20:FF:000001">
    <property type="entry name" value="Superoxide dismutase"/>
    <property type="match status" value="1"/>
</dbReference>
<dbReference type="Gene3D" id="1.10.287.990">
    <property type="entry name" value="Fe,Mn superoxide dismutase (SOD) domain"/>
    <property type="match status" value="1"/>
</dbReference>
<dbReference type="Gene3D" id="3.55.40.20">
    <property type="entry name" value="Iron/manganese superoxide dismutase, C-terminal domain"/>
    <property type="match status" value="1"/>
</dbReference>
<dbReference type="InterPro" id="IPR001189">
    <property type="entry name" value="Mn/Fe_SOD"/>
</dbReference>
<dbReference type="InterPro" id="IPR019833">
    <property type="entry name" value="Mn/Fe_SOD_BS"/>
</dbReference>
<dbReference type="InterPro" id="IPR019832">
    <property type="entry name" value="Mn/Fe_SOD_C"/>
</dbReference>
<dbReference type="InterPro" id="IPR019831">
    <property type="entry name" value="Mn/Fe_SOD_N"/>
</dbReference>
<dbReference type="InterPro" id="IPR036324">
    <property type="entry name" value="Mn/Fe_SOD_N_sf"/>
</dbReference>
<dbReference type="InterPro" id="IPR036314">
    <property type="entry name" value="SOD_C_sf"/>
</dbReference>
<dbReference type="PANTHER" id="PTHR42769">
    <property type="entry name" value="SUPEROXIDE DISMUTASE"/>
    <property type="match status" value="1"/>
</dbReference>
<dbReference type="PANTHER" id="PTHR42769:SF3">
    <property type="entry name" value="SUPEROXIDE DISMUTASE [FE] 2, CHLOROPLASTIC"/>
    <property type="match status" value="1"/>
</dbReference>
<dbReference type="Pfam" id="PF02777">
    <property type="entry name" value="Sod_Fe_C"/>
    <property type="match status" value="1"/>
</dbReference>
<dbReference type="Pfam" id="PF00081">
    <property type="entry name" value="Sod_Fe_N"/>
    <property type="match status" value="1"/>
</dbReference>
<dbReference type="PIRSF" id="PIRSF000349">
    <property type="entry name" value="SODismutase"/>
    <property type="match status" value="1"/>
</dbReference>
<dbReference type="PRINTS" id="PR01703">
    <property type="entry name" value="MNSODISMTASE"/>
</dbReference>
<dbReference type="SUPFAM" id="SSF54719">
    <property type="entry name" value="Fe,Mn superoxide dismutase (SOD), C-terminal domain"/>
    <property type="match status" value="1"/>
</dbReference>
<dbReference type="SUPFAM" id="SSF46609">
    <property type="entry name" value="Fe,Mn superoxide dismutase (SOD), N-terminal domain"/>
    <property type="match status" value="1"/>
</dbReference>
<dbReference type="PROSITE" id="PS00088">
    <property type="entry name" value="SOD_MN"/>
    <property type="match status" value="1"/>
</dbReference>
<name>SODF_LEGPH</name>